<feature type="chain" id="PRO_0000177828" description="D-alanine--D-alanine ligase">
    <location>
        <begin position="1"/>
        <end position="306"/>
    </location>
</feature>
<feature type="domain" description="ATP-grasp" evidence="2">
    <location>
        <begin position="104"/>
        <end position="303"/>
    </location>
</feature>
<feature type="binding site" evidence="2">
    <location>
        <begin position="134"/>
        <end position="189"/>
    </location>
    <ligand>
        <name>ATP</name>
        <dbReference type="ChEBI" id="CHEBI:30616"/>
    </ligand>
</feature>
<feature type="binding site" evidence="2">
    <location>
        <position position="257"/>
    </location>
    <ligand>
        <name>Mg(2+)</name>
        <dbReference type="ChEBI" id="CHEBI:18420"/>
        <label>1</label>
    </ligand>
</feature>
<feature type="binding site" evidence="2">
    <location>
        <position position="270"/>
    </location>
    <ligand>
        <name>Mg(2+)</name>
        <dbReference type="ChEBI" id="CHEBI:18420"/>
        <label>1</label>
    </ligand>
</feature>
<feature type="binding site" evidence="2">
    <location>
        <position position="270"/>
    </location>
    <ligand>
        <name>Mg(2+)</name>
        <dbReference type="ChEBI" id="CHEBI:18420"/>
        <label>2</label>
    </ligand>
</feature>
<feature type="binding site" evidence="2">
    <location>
        <position position="272"/>
    </location>
    <ligand>
        <name>Mg(2+)</name>
        <dbReference type="ChEBI" id="CHEBI:18420"/>
        <label>2</label>
    </ligand>
</feature>
<organism>
    <name type="scientific">Haemophilus influenzae (strain 86-028NP)</name>
    <dbReference type="NCBI Taxonomy" id="281310"/>
    <lineage>
        <taxon>Bacteria</taxon>
        <taxon>Pseudomonadati</taxon>
        <taxon>Pseudomonadota</taxon>
        <taxon>Gammaproteobacteria</taxon>
        <taxon>Pasteurellales</taxon>
        <taxon>Pasteurellaceae</taxon>
        <taxon>Haemophilus</taxon>
    </lineage>
</organism>
<protein>
    <recommendedName>
        <fullName evidence="2">D-alanine--D-alanine ligase</fullName>
        <ecNumber evidence="2">6.3.2.4</ecNumber>
    </recommendedName>
    <alternativeName>
        <fullName evidence="2">D-Ala-D-Ala ligase</fullName>
    </alternativeName>
    <alternativeName>
        <fullName evidence="2">D-alanylalanine synthetase</fullName>
    </alternativeName>
</protein>
<proteinExistence type="inferred from homology"/>
<comment type="function">
    <text evidence="2">Cell wall formation.</text>
</comment>
<comment type="catalytic activity">
    <reaction evidence="2">
        <text>2 D-alanine + ATP = D-alanyl-D-alanine + ADP + phosphate + H(+)</text>
        <dbReference type="Rhea" id="RHEA:11224"/>
        <dbReference type="ChEBI" id="CHEBI:15378"/>
        <dbReference type="ChEBI" id="CHEBI:30616"/>
        <dbReference type="ChEBI" id="CHEBI:43474"/>
        <dbReference type="ChEBI" id="CHEBI:57416"/>
        <dbReference type="ChEBI" id="CHEBI:57822"/>
        <dbReference type="ChEBI" id="CHEBI:456216"/>
        <dbReference type="EC" id="6.3.2.4"/>
    </reaction>
</comment>
<comment type="cofactor">
    <cofactor evidence="1">
        <name>Mg(2+)</name>
        <dbReference type="ChEBI" id="CHEBI:18420"/>
    </cofactor>
    <cofactor evidence="1">
        <name>Mn(2+)</name>
        <dbReference type="ChEBI" id="CHEBI:29035"/>
    </cofactor>
    <text evidence="1">Binds 2 magnesium or manganese ions per subunit.</text>
</comment>
<comment type="pathway">
    <text evidence="2">Cell wall biogenesis; peptidoglycan biosynthesis.</text>
</comment>
<comment type="subcellular location">
    <subcellularLocation>
        <location evidence="2">Cytoplasm</location>
    </subcellularLocation>
</comment>
<comment type="similarity">
    <text evidence="2">Belongs to the D-alanine--D-alanine ligase family.</text>
</comment>
<evidence type="ECO:0000250" key="1"/>
<evidence type="ECO:0000255" key="2">
    <source>
        <dbReference type="HAMAP-Rule" id="MF_00047"/>
    </source>
</evidence>
<name>DDL_HAEI8</name>
<sequence length="306" mass="33593">MNLKQEKIAVLLGGTSAEREVSFNSGKAVLEALLKQGYNAHPIDPKEYNVANLKKDGFNRAFNILHGRGGEDGTMQGLLEQIGLPYTGCGVMASALTMDKMRTKMLWKAFGLPVADMKVVTRETFSELDPQAVVAKLGLPLMVKPSLEGSSVGLTKVKAVEELKSAVEYALKFDNTILIEEWLAGDELTVPVLDNQVLPAIRIVPEGEFYDYEAKYISDNTQYFCPAGLTPEREQELAILVKRAYDALGCRGWSRIDVMCDAKGNFRLVEVNTNPGMTSHSLFPKSAATVGISFEQLVVKILELSL</sequence>
<keyword id="KW-0067">ATP-binding</keyword>
<keyword id="KW-0133">Cell shape</keyword>
<keyword id="KW-0961">Cell wall biogenesis/degradation</keyword>
<keyword id="KW-0963">Cytoplasm</keyword>
<keyword id="KW-0436">Ligase</keyword>
<keyword id="KW-0460">Magnesium</keyword>
<keyword id="KW-0464">Manganese</keyword>
<keyword id="KW-0479">Metal-binding</keyword>
<keyword id="KW-0547">Nucleotide-binding</keyword>
<keyword id="KW-0573">Peptidoglycan synthesis</keyword>
<reference key="1">
    <citation type="journal article" date="2005" name="J. Bacteriol.">
        <title>Genomic sequence of an otitis media isolate of nontypeable Haemophilus influenzae: comparative study with H. influenzae serotype d, strain KW20.</title>
        <authorList>
            <person name="Harrison A."/>
            <person name="Dyer D.W."/>
            <person name="Gillaspy A."/>
            <person name="Ray W.C."/>
            <person name="Mungur R."/>
            <person name="Carson M.B."/>
            <person name="Zhong H."/>
            <person name="Gipson J."/>
            <person name="Gipson M."/>
            <person name="Johnson L.S."/>
            <person name="Lewis L."/>
            <person name="Bakaletz L.O."/>
            <person name="Munson R.S. Jr."/>
        </authorList>
    </citation>
    <scope>NUCLEOTIDE SEQUENCE [LARGE SCALE GENOMIC DNA]</scope>
    <source>
        <strain>86-028NP</strain>
    </source>
</reference>
<dbReference type="EC" id="6.3.2.4" evidence="2"/>
<dbReference type="EMBL" id="CP000057">
    <property type="protein sequence ID" value="AAX88141.1"/>
    <property type="molecule type" value="Genomic_DNA"/>
</dbReference>
<dbReference type="RefSeq" id="WP_005651831.1">
    <property type="nucleotide sequence ID" value="NC_007146.2"/>
</dbReference>
<dbReference type="SMR" id="Q4QLF6"/>
<dbReference type="KEGG" id="hit:NTHI1308"/>
<dbReference type="HOGENOM" id="CLU_039268_1_2_6"/>
<dbReference type="UniPathway" id="UPA00219"/>
<dbReference type="Proteomes" id="UP000002525">
    <property type="component" value="Chromosome"/>
</dbReference>
<dbReference type="GO" id="GO:0005829">
    <property type="term" value="C:cytosol"/>
    <property type="evidence" value="ECO:0007669"/>
    <property type="project" value="TreeGrafter"/>
</dbReference>
<dbReference type="GO" id="GO:0005524">
    <property type="term" value="F:ATP binding"/>
    <property type="evidence" value="ECO:0007669"/>
    <property type="project" value="UniProtKB-KW"/>
</dbReference>
<dbReference type="GO" id="GO:0008716">
    <property type="term" value="F:D-alanine-D-alanine ligase activity"/>
    <property type="evidence" value="ECO:0007669"/>
    <property type="project" value="UniProtKB-UniRule"/>
</dbReference>
<dbReference type="GO" id="GO:0046872">
    <property type="term" value="F:metal ion binding"/>
    <property type="evidence" value="ECO:0007669"/>
    <property type="project" value="UniProtKB-KW"/>
</dbReference>
<dbReference type="GO" id="GO:0071555">
    <property type="term" value="P:cell wall organization"/>
    <property type="evidence" value="ECO:0007669"/>
    <property type="project" value="UniProtKB-KW"/>
</dbReference>
<dbReference type="GO" id="GO:0009252">
    <property type="term" value="P:peptidoglycan biosynthetic process"/>
    <property type="evidence" value="ECO:0007669"/>
    <property type="project" value="UniProtKB-UniRule"/>
</dbReference>
<dbReference type="GO" id="GO:0008360">
    <property type="term" value="P:regulation of cell shape"/>
    <property type="evidence" value="ECO:0007669"/>
    <property type="project" value="UniProtKB-KW"/>
</dbReference>
<dbReference type="FunFam" id="3.30.1490.20:FF:000007">
    <property type="entry name" value="D-alanine--D-alanine ligase"/>
    <property type="match status" value="1"/>
</dbReference>
<dbReference type="FunFam" id="3.30.470.20:FF:000008">
    <property type="entry name" value="D-alanine--D-alanine ligase"/>
    <property type="match status" value="1"/>
</dbReference>
<dbReference type="FunFam" id="3.40.50.20:FF:000013">
    <property type="entry name" value="D-alanine--D-alanine ligase"/>
    <property type="match status" value="1"/>
</dbReference>
<dbReference type="Gene3D" id="3.40.50.20">
    <property type="match status" value="1"/>
</dbReference>
<dbReference type="Gene3D" id="3.30.1490.20">
    <property type="entry name" value="ATP-grasp fold, A domain"/>
    <property type="match status" value="1"/>
</dbReference>
<dbReference type="Gene3D" id="3.30.470.20">
    <property type="entry name" value="ATP-grasp fold, B domain"/>
    <property type="match status" value="1"/>
</dbReference>
<dbReference type="HAMAP" id="MF_00047">
    <property type="entry name" value="Dala_Dala_lig"/>
    <property type="match status" value="1"/>
</dbReference>
<dbReference type="InterPro" id="IPR011761">
    <property type="entry name" value="ATP-grasp"/>
</dbReference>
<dbReference type="InterPro" id="IPR013815">
    <property type="entry name" value="ATP_grasp_subdomain_1"/>
</dbReference>
<dbReference type="InterPro" id="IPR000291">
    <property type="entry name" value="D-Ala_lig_Van_CS"/>
</dbReference>
<dbReference type="InterPro" id="IPR005905">
    <property type="entry name" value="D_ala_D_ala"/>
</dbReference>
<dbReference type="InterPro" id="IPR011095">
    <property type="entry name" value="Dala_Dala_lig_C"/>
</dbReference>
<dbReference type="InterPro" id="IPR011127">
    <property type="entry name" value="Dala_Dala_lig_N"/>
</dbReference>
<dbReference type="InterPro" id="IPR016185">
    <property type="entry name" value="PreATP-grasp_dom_sf"/>
</dbReference>
<dbReference type="NCBIfam" id="TIGR01205">
    <property type="entry name" value="D_ala_D_alaTIGR"/>
    <property type="match status" value="1"/>
</dbReference>
<dbReference type="NCBIfam" id="NF002378">
    <property type="entry name" value="PRK01372.1"/>
    <property type="match status" value="1"/>
</dbReference>
<dbReference type="PANTHER" id="PTHR23132">
    <property type="entry name" value="D-ALANINE--D-ALANINE LIGASE"/>
    <property type="match status" value="1"/>
</dbReference>
<dbReference type="PANTHER" id="PTHR23132:SF23">
    <property type="entry name" value="D-ALANINE--D-ALANINE LIGASE B"/>
    <property type="match status" value="1"/>
</dbReference>
<dbReference type="Pfam" id="PF07478">
    <property type="entry name" value="Dala_Dala_lig_C"/>
    <property type="match status" value="1"/>
</dbReference>
<dbReference type="Pfam" id="PF01820">
    <property type="entry name" value="Dala_Dala_lig_N"/>
    <property type="match status" value="2"/>
</dbReference>
<dbReference type="PIRSF" id="PIRSF039102">
    <property type="entry name" value="Ddl/VanB"/>
    <property type="match status" value="1"/>
</dbReference>
<dbReference type="SUPFAM" id="SSF56059">
    <property type="entry name" value="Glutathione synthetase ATP-binding domain-like"/>
    <property type="match status" value="1"/>
</dbReference>
<dbReference type="SUPFAM" id="SSF52440">
    <property type="entry name" value="PreATP-grasp domain"/>
    <property type="match status" value="1"/>
</dbReference>
<dbReference type="PROSITE" id="PS50975">
    <property type="entry name" value="ATP_GRASP"/>
    <property type="match status" value="1"/>
</dbReference>
<dbReference type="PROSITE" id="PS00843">
    <property type="entry name" value="DALA_DALA_LIGASE_1"/>
    <property type="match status" value="1"/>
</dbReference>
<dbReference type="PROSITE" id="PS00844">
    <property type="entry name" value="DALA_DALA_LIGASE_2"/>
    <property type="match status" value="1"/>
</dbReference>
<gene>
    <name evidence="2" type="primary">ddl</name>
    <name type="ordered locus">NTHI1308</name>
</gene>
<accession>Q4QLF6</accession>